<gene>
    <name type="primary">TMEM68</name>
    <name type="ORF">RCJMB04_19b17</name>
</gene>
<feature type="chain" id="PRO_0000254594" description="DGAT1/2-independent enzyme synthesizing storage lipids">
    <location>
        <begin position="1"/>
        <end position="332"/>
    </location>
</feature>
<feature type="topological domain" description="Lumenal" evidence="5">
    <location>
        <begin position="1"/>
        <end position="10"/>
    </location>
</feature>
<feature type="transmembrane region" description="Helical" evidence="3">
    <location>
        <begin position="11"/>
        <end position="31"/>
    </location>
</feature>
<feature type="topological domain" description="Cytoplasmic" evidence="5">
    <location>
        <begin position="32"/>
        <end position="45"/>
    </location>
</feature>
<feature type="transmembrane region" description="Helical" evidence="3">
    <location>
        <begin position="46"/>
        <end position="66"/>
    </location>
</feature>
<feature type="topological domain" description="Lumenal" evidence="5">
    <location>
        <begin position="67"/>
        <end position="332"/>
    </location>
</feature>
<feature type="active site" evidence="1">
    <location>
        <position position="132"/>
    </location>
</feature>
<feature type="glycosylation site" description="N-linked (GlcNAc...) asparagine" evidence="4">
    <location>
        <position position="5"/>
    </location>
</feature>
<feature type="glycosylation site" description="N-linked (GlcNAc...) asparagine" evidence="4">
    <location>
        <position position="289"/>
    </location>
</feature>
<accession>Q5ZJD8</accession>
<dbReference type="EC" id="2.3.1.-" evidence="1"/>
<dbReference type="EC" id="2.3.1.20" evidence="2"/>
<dbReference type="EC" id="2.3.1.22" evidence="2"/>
<dbReference type="EMBL" id="AJ720496">
    <property type="protein sequence ID" value="CAG32155.1"/>
    <property type="molecule type" value="mRNA"/>
</dbReference>
<dbReference type="RefSeq" id="NP_001026192.1">
    <property type="nucleotide sequence ID" value="NM_001031021.2"/>
</dbReference>
<dbReference type="SMR" id="Q5ZJD8"/>
<dbReference type="FunCoup" id="Q5ZJD8">
    <property type="interactions" value="2137"/>
</dbReference>
<dbReference type="STRING" id="9031.ENSGALP00000056689"/>
<dbReference type="GlyGen" id="Q5ZJD8">
    <property type="glycosylation" value="2 sites"/>
</dbReference>
<dbReference type="GeneID" id="421124"/>
<dbReference type="KEGG" id="gga:421124"/>
<dbReference type="CTD" id="137695"/>
<dbReference type="VEuPathDB" id="HostDB:geneid_421124"/>
<dbReference type="InParanoid" id="Q5ZJD8"/>
<dbReference type="OrthoDB" id="44277at2759"/>
<dbReference type="PhylomeDB" id="Q5ZJD8"/>
<dbReference type="PRO" id="PR:Q5ZJD8"/>
<dbReference type="Proteomes" id="UP000000539">
    <property type="component" value="Unassembled WGS sequence"/>
</dbReference>
<dbReference type="GO" id="GO:0005789">
    <property type="term" value="C:endoplasmic reticulum membrane"/>
    <property type="evidence" value="ECO:0000250"/>
    <property type="project" value="UniProtKB"/>
</dbReference>
<dbReference type="GO" id="GO:0016020">
    <property type="term" value="C:membrane"/>
    <property type="evidence" value="ECO:0000318"/>
    <property type="project" value="GO_Central"/>
</dbReference>
<dbReference type="GO" id="GO:0046027">
    <property type="term" value="F:phospholipid:diacylglycerol acyltransferase activity"/>
    <property type="evidence" value="ECO:0000250"/>
    <property type="project" value="UniProtKB"/>
</dbReference>
<dbReference type="GO" id="GO:0019432">
    <property type="term" value="P:triglyceride biosynthetic process"/>
    <property type="evidence" value="ECO:0000250"/>
    <property type="project" value="UniProtKB"/>
</dbReference>
<dbReference type="CDD" id="cd07987">
    <property type="entry name" value="LPLAT_MGAT-like"/>
    <property type="match status" value="1"/>
</dbReference>
<dbReference type="InterPro" id="IPR002123">
    <property type="entry name" value="Plipid/glycerol_acylTrfase"/>
</dbReference>
<dbReference type="PANTHER" id="PTHR22753">
    <property type="entry name" value="TRANSMEMBRANE PROTEIN 68"/>
    <property type="match status" value="1"/>
</dbReference>
<dbReference type="PANTHER" id="PTHR22753:SF23">
    <property type="entry name" value="TRANSMEMBRANE PROTEIN 68"/>
    <property type="match status" value="1"/>
</dbReference>
<dbReference type="Pfam" id="PF01553">
    <property type="entry name" value="Acyltransferase"/>
    <property type="match status" value="1"/>
</dbReference>
<dbReference type="SMART" id="SM00563">
    <property type="entry name" value="PlsC"/>
    <property type="match status" value="1"/>
</dbReference>
<sequence>MIGSNESSTEGPIPTSYLSFLAYLLGEWTGVEHTEDYLSYGAYLSWVLFPLAIVFILPVAIFFFCFNTSLLLLHIYKRRKNGFNEGHSGDVWYGAKEMLVNLWDGHGRVWHGYELHGDENIPEVPALIVFYHGASPVDYLYFMARLLIRRKRYCHVVADHFVFRLPGLKMFIEVLGVMHGPKEVCVSALKKGYLLAISPGGVREALFSDETYAIMWGNRKGFAQVAIDAKVPIIPMFTQNVREGIRTLGGIKIFRKLYERIRLPIVPMYGWFPVKFRTFIGEPIPYDPNITAEELTAKTKAALQALITKHQKIPGNILRALMERFQTRQKED</sequence>
<keyword id="KW-0012">Acyltransferase</keyword>
<keyword id="KW-0256">Endoplasmic reticulum</keyword>
<keyword id="KW-0325">Glycoprotein</keyword>
<keyword id="KW-0443">Lipid metabolism</keyword>
<keyword id="KW-0472">Membrane</keyword>
<keyword id="KW-1185">Reference proteome</keyword>
<keyword id="KW-0808">Transferase</keyword>
<keyword id="KW-0812">Transmembrane</keyword>
<keyword id="KW-1133">Transmembrane helix</keyword>
<organism>
    <name type="scientific">Gallus gallus</name>
    <name type="common">Chicken</name>
    <dbReference type="NCBI Taxonomy" id="9031"/>
    <lineage>
        <taxon>Eukaryota</taxon>
        <taxon>Metazoa</taxon>
        <taxon>Chordata</taxon>
        <taxon>Craniata</taxon>
        <taxon>Vertebrata</taxon>
        <taxon>Euteleostomi</taxon>
        <taxon>Archelosauria</taxon>
        <taxon>Archosauria</taxon>
        <taxon>Dinosauria</taxon>
        <taxon>Saurischia</taxon>
        <taxon>Theropoda</taxon>
        <taxon>Coelurosauria</taxon>
        <taxon>Aves</taxon>
        <taxon>Neognathae</taxon>
        <taxon>Galloanserae</taxon>
        <taxon>Galliformes</taxon>
        <taxon>Phasianidae</taxon>
        <taxon>Phasianinae</taxon>
        <taxon>Gallus</taxon>
    </lineage>
</organism>
<protein>
    <recommendedName>
        <fullName evidence="1">DGAT1/2-independent enzyme synthesizing storage lipids</fullName>
        <shortName evidence="1">DIESL</shortName>
        <ecNumber evidence="1">2.3.1.-</ecNumber>
    </recommendedName>
    <alternativeName>
        <fullName>Monoacylglycerol/Diacylglycerol O-acyltransferase</fullName>
        <shortName>MGAT/DGAT</shortName>
        <ecNumber evidence="2">2.3.1.20</ecNumber>
        <ecNumber evidence="2">2.3.1.22</ecNumber>
    </alternativeName>
    <alternativeName>
        <fullName>Transmembrane protein 68</fullName>
    </alternativeName>
</protein>
<evidence type="ECO:0000250" key="1">
    <source>
        <dbReference type="UniProtKB" id="Q96MH6"/>
    </source>
</evidence>
<evidence type="ECO:0000250" key="2">
    <source>
        <dbReference type="UniProtKB" id="Q9D850"/>
    </source>
</evidence>
<evidence type="ECO:0000255" key="3"/>
<evidence type="ECO:0000255" key="4">
    <source>
        <dbReference type="PROSITE-ProRule" id="PRU00498"/>
    </source>
</evidence>
<evidence type="ECO:0000305" key="5"/>
<name>DIESL_CHICK</name>
<reference key="1">
    <citation type="journal article" date="2005" name="Genome Biol.">
        <title>Full-length cDNAs from chicken bursal lymphocytes to facilitate gene function analysis.</title>
        <authorList>
            <person name="Caldwell R.B."/>
            <person name="Kierzek A.M."/>
            <person name="Arakawa H."/>
            <person name="Bezzubov Y."/>
            <person name="Zaim J."/>
            <person name="Fiedler P."/>
            <person name="Kutter S."/>
            <person name="Blagodatski A."/>
            <person name="Kostovska D."/>
            <person name="Koter M."/>
            <person name="Plachy J."/>
            <person name="Carninci P."/>
            <person name="Hayashizaki Y."/>
            <person name="Buerstedde J.-M."/>
        </authorList>
    </citation>
    <scope>NUCLEOTIDE SEQUENCE [LARGE SCALE MRNA]</scope>
    <source>
        <strain>CB</strain>
        <tissue>Bursa of Fabricius</tissue>
    </source>
</reference>
<proteinExistence type="evidence at transcript level"/>
<comment type="function">
    <text evidence="1 2">Catalytic subunit of the alternative triglyceride biosynthesis pathway, which mediates formation of triacylglycerol from diacylglycerol and membrane phospholipids. Synthesizes triacylglycerol at the expense of membrane phospholipids, such as phosphatidylcholine (PC) and its ether-linked form (ePC), thereby altering the composition of membranes. The alternative triglyceride biosynthesis pathway is probably required to provide the energy required for rapid growth when fuel sources are limiting. It maintains mitochondrial function during periods of extracellular lipid starvation (By similarity). Can also use acyl-CoA as donor: acts as a acyl-CoA:monoacylglycerol acyltransferase (MGAT), but also shows acyl-CoA:diacylglycerol acyltransferase (DGAT) activity (By similarity).</text>
</comment>
<comment type="catalytic activity">
    <reaction evidence="1">
        <text>a 1,2-diacylglycerol + a 1,2-diacyl-sn-glycero-3-phosphocholine = a triacylglycerol + a 1-acyl-sn-glycero-3-phosphocholine</text>
        <dbReference type="Rhea" id="RHEA:77743"/>
        <dbReference type="ChEBI" id="CHEBI:17855"/>
        <dbReference type="ChEBI" id="CHEBI:49172"/>
        <dbReference type="ChEBI" id="CHEBI:57643"/>
        <dbReference type="ChEBI" id="CHEBI:58168"/>
    </reaction>
    <physiologicalReaction direction="left-to-right" evidence="1">
        <dbReference type="Rhea" id="RHEA:77744"/>
    </physiologicalReaction>
</comment>
<comment type="catalytic activity">
    <reaction evidence="1">
        <text>a 1-O-alkyl-2-acyl-sn-glycero-3-phosphocholine + a 1,2-diacylglycerol = a 1-O-alkyl-sn-glycero-3-phosphocholine + a triacylglycerol</text>
        <dbReference type="Rhea" id="RHEA:77759"/>
        <dbReference type="ChEBI" id="CHEBI:17855"/>
        <dbReference type="ChEBI" id="CHEBI:30909"/>
        <dbReference type="ChEBI" id="CHEBI:36702"/>
        <dbReference type="ChEBI" id="CHEBI:49172"/>
    </reaction>
    <physiologicalReaction direction="left-to-right" evidence="1">
        <dbReference type="Rhea" id="RHEA:77760"/>
    </physiologicalReaction>
</comment>
<comment type="catalytic activity">
    <reaction evidence="2">
        <text>a 2-acylglycerol + an acyl-CoA = a 1,2-diacylglycerol + CoA</text>
        <dbReference type="Rhea" id="RHEA:16741"/>
        <dbReference type="ChEBI" id="CHEBI:17389"/>
        <dbReference type="ChEBI" id="CHEBI:49172"/>
        <dbReference type="ChEBI" id="CHEBI:57287"/>
        <dbReference type="ChEBI" id="CHEBI:58342"/>
        <dbReference type="EC" id="2.3.1.22"/>
    </reaction>
    <physiologicalReaction direction="left-to-right" evidence="2">
        <dbReference type="Rhea" id="RHEA:16742"/>
    </physiologicalReaction>
</comment>
<comment type="catalytic activity">
    <reaction evidence="2">
        <text>an acyl-CoA + a 1,2-diacyl-sn-glycerol = a triacyl-sn-glycerol + CoA</text>
        <dbReference type="Rhea" id="RHEA:10868"/>
        <dbReference type="ChEBI" id="CHEBI:17815"/>
        <dbReference type="ChEBI" id="CHEBI:57287"/>
        <dbReference type="ChEBI" id="CHEBI:58342"/>
        <dbReference type="ChEBI" id="CHEBI:64615"/>
        <dbReference type="EC" id="2.3.1.20"/>
    </reaction>
    <physiologicalReaction direction="left-to-right" evidence="2">
        <dbReference type="Rhea" id="RHEA:10869"/>
    </physiologicalReaction>
</comment>
<comment type="catalytic activity">
    <reaction evidence="2">
        <text>2-(9Z-octadecenoyl)-glycerol + (9Z)-octadecenoyl-CoA = 1,2-di-(9Z-octadecenoyl)-glycerol + CoA</text>
        <dbReference type="Rhea" id="RHEA:39951"/>
        <dbReference type="ChEBI" id="CHEBI:52323"/>
        <dbReference type="ChEBI" id="CHEBI:57287"/>
        <dbReference type="ChEBI" id="CHEBI:57387"/>
        <dbReference type="ChEBI" id="CHEBI:73990"/>
    </reaction>
    <physiologicalReaction direction="left-to-right" evidence="2">
        <dbReference type="Rhea" id="RHEA:39952"/>
    </physiologicalReaction>
</comment>
<comment type="catalytic activity">
    <reaction evidence="2">
        <text>1,2-di-(9Z-octadecenoyl)-sn-glycerol + (9Z)-octadecenoyl-CoA = 1,2,3-tri-(9Z-octadecenoyl)-glycerol + CoA</text>
        <dbReference type="Rhea" id="RHEA:38219"/>
        <dbReference type="ChEBI" id="CHEBI:52333"/>
        <dbReference type="ChEBI" id="CHEBI:53753"/>
        <dbReference type="ChEBI" id="CHEBI:57287"/>
        <dbReference type="ChEBI" id="CHEBI:57387"/>
    </reaction>
    <physiologicalReaction direction="left-to-right" evidence="2">
        <dbReference type="Rhea" id="RHEA:38220"/>
    </physiologicalReaction>
</comment>
<comment type="subcellular location">
    <subcellularLocation>
        <location evidence="1">Endoplasmic reticulum membrane</location>
        <topology evidence="3">Multi-pass membrane protein</topology>
    </subcellularLocation>
</comment>
<comment type="similarity">
    <text evidence="5">Belongs to the diacylglycerol acyltransferase family. Highly divergent.</text>
</comment>